<dbReference type="EMBL" id="CP000325">
    <property type="protein sequence ID" value="ABL06479.1"/>
    <property type="molecule type" value="Genomic_DNA"/>
</dbReference>
<dbReference type="RefSeq" id="WP_011742078.1">
    <property type="nucleotide sequence ID" value="NC_008611.1"/>
</dbReference>
<dbReference type="SMR" id="A0PVW0"/>
<dbReference type="GeneID" id="93438424"/>
<dbReference type="KEGG" id="mul:MUL_4516"/>
<dbReference type="eggNOG" id="COG1826">
    <property type="taxonomic scope" value="Bacteria"/>
</dbReference>
<dbReference type="HOGENOM" id="CLU_086034_2_0_11"/>
<dbReference type="Proteomes" id="UP000000765">
    <property type="component" value="Chromosome"/>
</dbReference>
<dbReference type="GO" id="GO:0033281">
    <property type="term" value="C:TAT protein transport complex"/>
    <property type="evidence" value="ECO:0007669"/>
    <property type="project" value="UniProtKB-UniRule"/>
</dbReference>
<dbReference type="GO" id="GO:0008320">
    <property type="term" value="F:protein transmembrane transporter activity"/>
    <property type="evidence" value="ECO:0007669"/>
    <property type="project" value="UniProtKB-UniRule"/>
</dbReference>
<dbReference type="GO" id="GO:0043953">
    <property type="term" value="P:protein transport by the Tat complex"/>
    <property type="evidence" value="ECO:0007669"/>
    <property type="project" value="UniProtKB-UniRule"/>
</dbReference>
<dbReference type="Gene3D" id="1.20.5.3310">
    <property type="match status" value="1"/>
</dbReference>
<dbReference type="HAMAP" id="MF_00237">
    <property type="entry name" value="TatB"/>
    <property type="match status" value="1"/>
</dbReference>
<dbReference type="InterPro" id="IPR003369">
    <property type="entry name" value="TatA/B/E"/>
</dbReference>
<dbReference type="InterPro" id="IPR018448">
    <property type="entry name" value="TatB"/>
</dbReference>
<dbReference type="NCBIfam" id="TIGR01410">
    <property type="entry name" value="tatB"/>
    <property type="match status" value="1"/>
</dbReference>
<dbReference type="Pfam" id="PF02416">
    <property type="entry name" value="TatA_B_E"/>
    <property type="match status" value="1"/>
</dbReference>
<dbReference type="PRINTS" id="PR01506">
    <property type="entry name" value="TATBPROTEIN"/>
</dbReference>
<name>TATB_MYCUA</name>
<keyword id="KW-1003">Cell membrane</keyword>
<keyword id="KW-0472">Membrane</keyword>
<keyword id="KW-0653">Protein transport</keyword>
<keyword id="KW-0811">Translocation</keyword>
<keyword id="KW-0812">Transmembrane</keyword>
<keyword id="KW-1133">Transmembrane helix</keyword>
<keyword id="KW-0813">Transport</keyword>
<organism>
    <name type="scientific">Mycobacterium ulcerans (strain Agy99)</name>
    <dbReference type="NCBI Taxonomy" id="362242"/>
    <lineage>
        <taxon>Bacteria</taxon>
        <taxon>Bacillati</taxon>
        <taxon>Actinomycetota</taxon>
        <taxon>Actinomycetes</taxon>
        <taxon>Mycobacteriales</taxon>
        <taxon>Mycobacteriaceae</taxon>
        <taxon>Mycobacterium</taxon>
        <taxon>Mycobacterium ulcerans group</taxon>
    </lineage>
</organism>
<protein>
    <recommendedName>
        <fullName evidence="1">Sec-independent protein translocase protein TatB</fullName>
    </recommendedName>
</protein>
<feature type="chain" id="PRO_0000301193" description="Sec-independent protein translocase protein TatB">
    <location>
        <begin position="1"/>
        <end position="130"/>
    </location>
</feature>
<feature type="transmembrane region" description="Helical" evidence="1">
    <location>
        <begin position="2"/>
        <end position="22"/>
    </location>
</feature>
<feature type="region of interest" description="Disordered" evidence="2">
    <location>
        <begin position="108"/>
        <end position="130"/>
    </location>
</feature>
<evidence type="ECO:0000255" key="1">
    <source>
        <dbReference type="HAMAP-Rule" id="MF_00237"/>
    </source>
</evidence>
<evidence type="ECO:0000256" key="2">
    <source>
        <dbReference type="SAM" id="MobiDB-lite"/>
    </source>
</evidence>
<comment type="function">
    <text evidence="1">Part of the twin-arginine translocation (Tat) system that transports large folded proteins containing a characteristic twin-arginine motif in their signal peptide across membranes. Together with TatC, TatB is part of a receptor directly interacting with Tat signal peptides. TatB may form an oligomeric binding site that transiently accommodates folded Tat precursor proteins before their translocation.</text>
</comment>
<comment type="subunit">
    <text evidence="1">The Tat system comprises two distinct complexes: a TatABC complex, containing multiple copies of TatA, TatB and TatC subunits, and a separate TatA complex, containing only TatA subunits. Substrates initially bind to the TatABC complex, which probably triggers association of the separate TatA complex to form the active translocon.</text>
</comment>
<comment type="subcellular location">
    <subcellularLocation>
        <location evidence="1">Cell membrane</location>
        <topology evidence="1">Single-pass membrane protein</topology>
    </subcellularLocation>
</comment>
<comment type="similarity">
    <text evidence="1">Belongs to the TatB family.</text>
</comment>
<reference key="1">
    <citation type="journal article" date="2007" name="Genome Res.">
        <title>Reductive evolution and niche adaptation inferred from the genome of Mycobacterium ulcerans, the causative agent of Buruli ulcer.</title>
        <authorList>
            <person name="Stinear T.P."/>
            <person name="Seemann T."/>
            <person name="Pidot S."/>
            <person name="Frigui W."/>
            <person name="Reysset G."/>
            <person name="Garnier T."/>
            <person name="Meurice G."/>
            <person name="Simon D."/>
            <person name="Bouchier C."/>
            <person name="Ma L."/>
            <person name="Tichit M."/>
            <person name="Porter J.L."/>
            <person name="Ryan J."/>
            <person name="Johnson P.D.R."/>
            <person name="Davies J.K."/>
            <person name="Jenkin G.A."/>
            <person name="Small P.L.C."/>
            <person name="Jones L.M."/>
            <person name="Tekaia F."/>
            <person name="Laval F."/>
            <person name="Daffe M."/>
            <person name="Parkhill J."/>
            <person name="Cole S.T."/>
        </authorList>
    </citation>
    <scope>NUCLEOTIDE SEQUENCE [LARGE SCALE GENOMIC DNA]</scope>
    <source>
        <strain>Agy99</strain>
    </source>
</reference>
<accession>A0PVW0</accession>
<sequence>MFANIGWGEMLVLVVVGLVVLGPERLPGAIRWSSGALRQARDYLSGVTSQLRDDMGPEFDDLRGQLGELQKLRGMTPRAALTKHLLDGDDSIFTGNFDKAASATPAVDAVASAQEAPDEPVRPPFDSDAT</sequence>
<gene>
    <name evidence="1" type="primary">tatB</name>
    <name type="ordered locus">MUL_4516</name>
</gene>
<proteinExistence type="inferred from homology"/>